<organism>
    <name type="scientific">Pseudomonas paraeruginosa (strain DSM 24068 / PA7)</name>
    <name type="common">Pseudomonas aeruginosa (strain PA7)</name>
    <dbReference type="NCBI Taxonomy" id="381754"/>
    <lineage>
        <taxon>Bacteria</taxon>
        <taxon>Pseudomonadati</taxon>
        <taxon>Pseudomonadota</taxon>
        <taxon>Gammaproteobacteria</taxon>
        <taxon>Pseudomonadales</taxon>
        <taxon>Pseudomonadaceae</taxon>
        <taxon>Pseudomonas</taxon>
        <taxon>Pseudomonas paraeruginosa</taxon>
    </lineage>
</organism>
<sequence length="679" mass="75088">MSEPRKILVTSALPYANGSIHLGHMLEYIQTDMWVRFQKMRGNQAIYVCADDAHGSAIMLRAEREGITSEQLIDAVRAEHMGDFADFLVDFDNYHSTHSEENRELSSAIYLKLREAGHIDTRPVTQYFDPDKQMFLADRFIKGTCPKCGTADQYGDNCEACGATYAPTELKDPKSAISGATPVLKESLHYFFKLPDFEAMLKQWTRSGALQESVANKLAEWLDSGLQQWDISRDAPYFGFEIPDAPGKYFYVWLDAPIGYMASFRNLCARRPELDFDAFWGKDSGAELYHFIGKDIVNFHALFWPAMLEGAGYRKPTALNVHGYLTVNGQKMSKSRGTFVKARTYLDHLDPEYLRYYYASKLGRGVEDLDLNLEDFVQKVNSDLVGKVVNIASRCAGFIHKGNAGVLVGADPAPELLAAFREAAPGIAEAYEARDFNRAMREIMALADRANAWIAEQAPWALAKQEGQQDKVQAVCGLGINLFRQLVIFLKPVLPKLAAAAEAFLNVAPLTWADHQTLLANHQLNPFQPLMTRIEPAKVEAMIEASKEDLAAAAASQPAGNGELVKEPIAAEIDFDAFAAVDLRIALIEKCEFVEGADKLLRLSLDIGDAKRNVFSGIKSAYPDPSALEGRLTLYVANLAPRKMKFGVSEGMVLAAGPGGEEIYLLSPDSGAKPGQRVK</sequence>
<proteinExistence type="inferred from homology"/>
<reference key="1">
    <citation type="submission" date="2007-06" db="EMBL/GenBank/DDBJ databases">
        <authorList>
            <person name="Dodson R.J."/>
            <person name="Harkins D."/>
            <person name="Paulsen I.T."/>
        </authorList>
    </citation>
    <scope>NUCLEOTIDE SEQUENCE [LARGE SCALE GENOMIC DNA]</scope>
    <source>
        <strain>DSM 24068 / PA7</strain>
    </source>
</reference>
<feature type="chain" id="PRO_0000331867" description="Methionine--tRNA ligase">
    <location>
        <begin position="1"/>
        <end position="679"/>
    </location>
</feature>
<feature type="domain" description="tRNA-binding" evidence="1">
    <location>
        <begin position="577"/>
        <end position="679"/>
    </location>
</feature>
<feature type="short sequence motif" description="'HIGH' region">
    <location>
        <begin position="14"/>
        <end position="24"/>
    </location>
</feature>
<feature type="short sequence motif" description="'KMSKS' region">
    <location>
        <begin position="331"/>
        <end position="335"/>
    </location>
</feature>
<feature type="binding site" evidence="1">
    <location>
        <position position="145"/>
    </location>
    <ligand>
        <name>Zn(2+)</name>
        <dbReference type="ChEBI" id="CHEBI:29105"/>
    </ligand>
</feature>
<feature type="binding site" evidence="1">
    <location>
        <position position="148"/>
    </location>
    <ligand>
        <name>Zn(2+)</name>
        <dbReference type="ChEBI" id="CHEBI:29105"/>
    </ligand>
</feature>
<feature type="binding site" evidence="1">
    <location>
        <position position="158"/>
    </location>
    <ligand>
        <name>Zn(2+)</name>
        <dbReference type="ChEBI" id="CHEBI:29105"/>
    </ligand>
</feature>
<feature type="binding site" evidence="1">
    <location>
        <position position="161"/>
    </location>
    <ligand>
        <name>Zn(2+)</name>
        <dbReference type="ChEBI" id="CHEBI:29105"/>
    </ligand>
</feature>
<feature type="binding site" evidence="1">
    <location>
        <position position="334"/>
    </location>
    <ligand>
        <name>ATP</name>
        <dbReference type="ChEBI" id="CHEBI:30616"/>
    </ligand>
</feature>
<comment type="function">
    <text evidence="1">Is required not only for elongation of protein synthesis but also for the initiation of all mRNA translation through initiator tRNA(fMet) aminoacylation.</text>
</comment>
<comment type="catalytic activity">
    <reaction evidence="1">
        <text>tRNA(Met) + L-methionine + ATP = L-methionyl-tRNA(Met) + AMP + diphosphate</text>
        <dbReference type="Rhea" id="RHEA:13481"/>
        <dbReference type="Rhea" id="RHEA-COMP:9667"/>
        <dbReference type="Rhea" id="RHEA-COMP:9698"/>
        <dbReference type="ChEBI" id="CHEBI:30616"/>
        <dbReference type="ChEBI" id="CHEBI:33019"/>
        <dbReference type="ChEBI" id="CHEBI:57844"/>
        <dbReference type="ChEBI" id="CHEBI:78442"/>
        <dbReference type="ChEBI" id="CHEBI:78530"/>
        <dbReference type="ChEBI" id="CHEBI:456215"/>
        <dbReference type="EC" id="6.1.1.10"/>
    </reaction>
</comment>
<comment type="cofactor">
    <cofactor evidence="1">
        <name>Zn(2+)</name>
        <dbReference type="ChEBI" id="CHEBI:29105"/>
    </cofactor>
    <text evidence="1">Binds 1 zinc ion per subunit.</text>
</comment>
<comment type="subunit">
    <text evidence="1">Homodimer.</text>
</comment>
<comment type="subcellular location">
    <subcellularLocation>
        <location evidence="1">Cytoplasm</location>
    </subcellularLocation>
</comment>
<comment type="similarity">
    <text evidence="1">Belongs to the class-I aminoacyl-tRNA synthetase family. MetG type 1 subfamily.</text>
</comment>
<gene>
    <name evidence="1" type="primary">metG</name>
    <name type="ordered locus">PSPA7_1644</name>
</gene>
<protein>
    <recommendedName>
        <fullName evidence="1">Methionine--tRNA ligase</fullName>
        <ecNumber evidence="1">6.1.1.10</ecNumber>
    </recommendedName>
    <alternativeName>
        <fullName evidence="1">Methionyl-tRNA synthetase</fullName>
        <shortName evidence="1">MetRS</shortName>
    </alternativeName>
</protein>
<name>SYM_PSEP7</name>
<keyword id="KW-0030">Aminoacyl-tRNA synthetase</keyword>
<keyword id="KW-0067">ATP-binding</keyword>
<keyword id="KW-0963">Cytoplasm</keyword>
<keyword id="KW-0436">Ligase</keyword>
<keyword id="KW-0479">Metal-binding</keyword>
<keyword id="KW-0547">Nucleotide-binding</keyword>
<keyword id="KW-0648">Protein biosynthesis</keyword>
<keyword id="KW-0694">RNA-binding</keyword>
<keyword id="KW-0820">tRNA-binding</keyword>
<keyword id="KW-0862">Zinc</keyword>
<evidence type="ECO:0000255" key="1">
    <source>
        <dbReference type="HAMAP-Rule" id="MF_00098"/>
    </source>
</evidence>
<accession>A6V1U3</accession>
<dbReference type="EC" id="6.1.1.10" evidence="1"/>
<dbReference type="EMBL" id="CP000744">
    <property type="protein sequence ID" value="ABR83949.1"/>
    <property type="molecule type" value="Genomic_DNA"/>
</dbReference>
<dbReference type="RefSeq" id="WP_012074799.1">
    <property type="nucleotide sequence ID" value="NC_009656.1"/>
</dbReference>
<dbReference type="SMR" id="A6V1U3"/>
<dbReference type="KEGG" id="pap:PSPA7_1644"/>
<dbReference type="HOGENOM" id="CLU_009710_7_0_6"/>
<dbReference type="Proteomes" id="UP000001582">
    <property type="component" value="Chromosome"/>
</dbReference>
<dbReference type="GO" id="GO:0005829">
    <property type="term" value="C:cytosol"/>
    <property type="evidence" value="ECO:0007669"/>
    <property type="project" value="TreeGrafter"/>
</dbReference>
<dbReference type="GO" id="GO:0005524">
    <property type="term" value="F:ATP binding"/>
    <property type="evidence" value="ECO:0007669"/>
    <property type="project" value="UniProtKB-UniRule"/>
</dbReference>
<dbReference type="GO" id="GO:0046872">
    <property type="term" value="F:metal ion binding"/>
    <property type="evidence" value="ECO:0007669"/>
    <property type="project" value="UniProtKB-KW"/>
</dbReference>
<dbReference type="GO" id="GO:0004825">
    <property type="term" value="F:methionine-tRNA ligase activity"/>
    <property type="evidence" value="ECO:0007669"/>
    <property type="project" value="UniProtKB-UniRule"/>
</dbReference>
<dbReference type="GO" id="GO:0000049">
    <property type="term" value="F:tRNA binding"/>
    <property type="evidence" value="ECO:0007669"/>
    <property type="project" value="UniProtKB-KW"/>
</dbReference>
<dbReference type="GO" id="GO:0006431">
    <property type="term" value="P:methionyl-tRNA aminoacylation"/>
    <property type="evidence" value="ECO:0007669"/>
    <property type="project" value="UniProtKB-UniRule"/>
</dbReference>
<dbReference type="CDD" id="cd07957">
    <property type="entry name" value="Anticodon_Ia_Met"/>
    <property type="match status" value="1"/>
</dbReference>
<dbReference type="CDD" id="cd00814">
    <property type="entry name" value="MetRS_core"/>
    <property type="match status" value="1"/>
</dbReference>
<dbReference type="CDD" id="cd02800">
    <property type="entry name" value="tRNA_bind_EcMetRS_like"/>
    <property type="match status" value="1"/>
</dbReference>
<dbReference type="FunFam" id="1.10.730.10:FF:000005">
    <property type="entry name" value="Methionine--tRNA ligase"/>
    <property type="match status" value="1"/>
</dbReference>
<dbReference type="FunFam" id="2.20.28.20:FF:000001">
    <property type="entry name" value="Methionine--tRNA ligase"/>
    <property type="match status" value="1"/>
</dbReference>
<dbReference type="FunFam" id="2.40.50.140:FF:000042">
    <property type="entry name" value="Methionine--tRNA ligase"/>
    <property type="match status" value="1"/>
</dbReference>
<dbReference type="Gene3D" id="3.40.50.620">
    <property type="entry name" value="HUPs"/>
    <property type="match status" value="1"/>
</dbReference>
<dbReference type="Gene3D" id="1.10.730.10">
    <property type="entry name" value="Isoleucyl-tRNA Synthetase, Domain 1"/>
    <property type="match status" value="1"/>
</dbReference>
<dbReference type="Gene3D" id="2.20.28.20">
    <property type="entry name" value="Methionyl-tRNA synthetase, Zn-domain"/>
    <property type="match status" value="1"/>
</dbReference>
<dbReference type="Gene3D" id="2.40.50.140">
    <property type="entry name" value="Nucleic acid-binding proteins"/>
    <property type="match status" value="1"/>
</dbReference>
<dbReference type="HAMAP" id="MF_00098">
    <property type="entry name" value="Met_tRNA_synth_type1"/>
    <property type="match status" value="1"/>
</dbReference>
<dbReference type="InterPro" id="IPR001412">
    <property type="entry name" value="aa-tRNA-synth_I_CS"/>
</dbReference>
<dbReference type="InterPro" id="IPR041872">
    <property type="entry name" value="Anticodon_Met"/>
</dbReference>
<dbReference type="InterPro" id="IPR004495">
    <property type="entry name" value="Met-tRNA-synth_bsu_C"/>
</dbReference>
<dbReference type="InterPro" id="IPR023458">
    <property type="entry name" value="Met-tRNA_ligase_1"/>
</dbReference>
<dbReference type="InterPro" id="IPR014758">
    <property type="entry name" value="Met-tRNA_synth"/>
</dbReference>
<dbReference type="InterPro" id="IPR015413">
    <property type="entry name" value="Methionyl/Leucyl_tRNA_Synth"/>
</dbReference>
<dbReference type="InterPro" id="IPR033911">
    <property type="entry name" value="MetRS_core"/>
</dbReference>
<dbReference type="InterPro" id="IPR029038">
    <property type="entry name" value="MetRS_Zn"/>
</dbReference>
<dbReference type="InterPro" id="IPR012340">
    <property type="entry name" value="NA-bd_OB-fold"/>
</dbReference>
<dbReference type="InterPro" id="IPR014729">
    <property type="entry name" value="Rossmann-like_a/b/a_fold"/>
</dbReference>
<dbReference type="InterPro" id="IPR002547">
    <property type="entry name" value="tRNA-bd_dom"/>
</dbReference>
<dbReference type="InterPro" id="IPR009080">
    <property type="entry name" value="tRNAsynth_Ia_anticodon-bd"/>
</dbReference>
<dbReference type="NCBIfam" id="TIGR00398">
    <property type="entry name" value="metG"/>
    <property type="match status" value="1"/>
</dbReference>
<dbReference type="NCBIfam" id="TIGR00399">
    <property type="entry name" value="metG_C_term"/>
    <property type="match status" value="1"/>
</dbReference>
<dbReference type="NCBIfam" id="NF001100">
    <property type="entry name" value="PRK00133.1"/>
    <property type="match status" value="1"/>
</dbReference>
<dbReference type="PANTHER" id="PTHR45765">
    <property type="entry name" value="METHIONINE--TRNA LIGASE"/>
    <property type="match status" value="1"/>
</dbReference>
<dbReference type="PANTHER" id="PTHR45765:SF1">
    <property type="entry name" value="METHIONINE--TRNA LIGASE, CYTOPLASMIC"/>
    <property type="match status" value="1"/>
</dbReference>
<dbReference type="Pfam" id="PF19303">
    <property type="entry name" value="Anticodon_3"/>
    <property type="match status" value="1"/>
</dbReference>
<dbReference type="Pfam" id="PF09334">
    <property type="entry name" value="tRNA-synt_1g"/>
    <property type="match status" value="1"/>
</dbReference>
<dbReference type="Pfam" id="PF01588">
    <property type="entry name" value="tRNA_bind"/>
    <property type="match status" value="1"/>
</dbReference>
<dbReference type="PRINTS" id="PR01041">
    <property type="entry name" value="TRNASYNTHMET"/>
</dbReference>
<dbReference type="SUPFAM" id="SSF47323">
    <property type="entry name" value="Anticodon-binding domain of a subclass of class I aminoacyl-tRNA synthetases"/>
    <property type="match status" value="1"/>
</dbReference>
<dbReference type="SUPFAM" id="SSF57770">
    <property type="entry name" value="Methionyl-tRNA synthetase (MetRS), Zn-domain"/>
    <property type="match status" value="1"/>
</dbReference>
<dbReference type="SUPFAM" id="SSF50249">
    <property type="entry name" value="Nucleic acid-binding proteins"/>
    <property type="match status" value="1"/>
</dbReference>
<dbReference type="SUPFAM" id="SSF52374">
    <property type="entry name" value="Nucleotidylyl transferase"/>
    <property type="match status" value="1"/>
</dbReference>
<dbReference type="PROSITE" id="PS00178">
    <property type="entry name" value="AA_TRNA_LIGASE_I"/>
    <property type="match status" value="1"/>
</dbReference>
<dbReference type="PROSITE" id="PS50886">
    <property type="entry name" value="TRBD"/>
    <property type="match status" value="1"/>
</dbReference>